<comment type="function">
    <text evidence="1">Catalyzes the attachment of proline to tRNA(Pro) in a two-step reaction: proline is first activated by ATP to form Pro-AMP and then transferred to the acceptor end of tRNA(Pro). As ProRS can inadvertently accommodate and process non-cognate amino acids such as alanine and cysteine, to avoid such errors it has two additional distinct editing activities against alanine. One activity is designated as 'pretransfer' editing and involves the tRNA(Pro)-independent hydrolysis of activated Ala-AMP. The other activity is designated 'posttransfer' editing and involves deacylation of mischarged Ala-tRNA(Pro). The misacylated Cys-tRNA(Pro) is not edited by ProRS.</text>
</comment>
<comment type="catalytic activity">
    <reaction evidence="1">
        <text>tRNA(Pro) + L-proline + ATP = L-prolyl-tRNA(Pro) + AMP + diphosphate</text>
        <dbReference type="Rhea" id="RHEA:14305"/>
        <dbReference type="Rhea" id="RHEA-COMP:9700"/>
        <dbReference type="Rhea" id="RHEA-COMP:9702"/>
        <dbReference type="ChEBI" id="CHEBI:30616"/>
        <dbReference type="ChEBI" id="CHEBI:33019"/>
        <dbReference type="ChEBI" id="CHEBI:60039"/>
        <dbReference type="ChEBI" id="CHEBI:78442"/>
        <dbReference type="ChEBI" id="CHEBI:78532"/>
        <dbReference type="ChEBI" id="CHEBI:456215"/>
        <dbReference type="EC" id="6.1.1.15"/>
    </reaction>
</comment>
<comment type="subunit">
    <text evidence="1">Homodimer.</text>
</comment>
<comment type="subcellular location">
    <subcellularLocation>
        <location evidence="1">Cytoplasm</location>
    </subcellularLocation>
</comment>
<comment type="domain">
    <text evidence="1">Consists of three domains: the N-terminal catalytic domain, the editing domain and the C-terminal anticodon-binding domain.</text>
</comment>
<comment type="similarity">
    <text evidence="1">Belongs to the class-II aminoacyl-tRNA synthetase family. ProS type 1 subfamily.</text>
</comment>
<name>SYP_STRPB</name>
<protein>
    <recommendedName>
        <fullName evidence="1">Proline--tRNA ligase</fullName>
        <ecNumber evidence="1">6.1.1.15</ecNumber>
    </recommendedName>
    <alternativeName>
        <fullName evidence="1">Prolyl-tRNA synthetase</fullName>
        <shortName evidence="1">ProRS</shortName>
    </alternativeName>
</protein>
<gene>
    <name evidence="1" type="primary">proS</name>
    <name type="ordered locus">MGAS2096_Spy1696</name>
</gene>
<dbReference type="EC" id="6.1.1.15" evidence="1"/>
<dbReference type="EMBL" id="CP000261">
    <property type="protein sequence ID" value="ABF36748.1"/>
    <property type="molecule type" value="Genomic_DNA"/>
</dbReference>
<dbReference type="SMR" id="Q1J9R3"/>
<dbReference type="KEGG" id="spj:MGAS2096_Spy1696"/>
<dbReference type="HOGENOM" id="CLU_016739_0_0_9"/>
<dbReference type="GO" id="GO:0005829">
    <property type="term" value="C:cytosol"/>
    <property type="evidence" value="ECO:0007669"/>
    <property type="project" value="TreeGrafter"/>
</dbReference>
<dbReference type="GO" id="GO:0002161">
    <property type="term" value="F:aminoacyl-tRNA deacylase activity"/>
    <property type="evidence" value="ECO:0007669"/>
    <property type="project" value="InterPro"/>
</dbReference>
<dbReference type="GO" id="GO:0005524">
    <property type="term" value="F:ATP binding"/>
    <property type="evidence" value="ECO:0007669"/>
    <property type="project" value="UniProtKB-UniRule"/>
</dbReference>
<dbReference type="GO" id="GO:0140096">
    <property type="term" value="F:catalytic activity, acting on a protein"/>
    <property type="evidence" value="ECO:0007669"/>
    <property type="project" value="UniProtKB-ARBA"/>
</dbReference>
<dbReference type="GO" id="GO:0004827">
    <property type="term" value="F:proline-tRNA ligase activity"/>
    <property type="evidence" value="ECO:0007669"/>
    <property type="project" value="UniProtKB-UniRule"/>
</dbReference>
<dbReference type="GO" id="GO:0016740">
    <property type="term" value="F:transferase activity"/>
    <property type="evidence" value="ECO:0007669"/>
    <property type="project" value="UniProtKB-ARBA"/>
</dbReference>
<dbReference type="GO" id="GO:0006433">
    <property type="term" value="P:prolyl-tRNA aminoacylation"/>
    <property type="evidence" value="ECO:0007669"/>
    <property type="project" value="UniProtKB-UniRule"/>
</dbReference>
<dbReference type="CDD" id="cd04334">
    <property type="entry name" value="ProRS-INS"/>
    <property type="match status" value="1"/>
</dbReference>
<dbReference type="CDD" id="cd00861">
    <property type="entry name" value="ProRS_anticodon_short"/>
    <property type="match status" value="1"/>
</dbReference>
<dbReference type="FunFam" id="3.40.50.800:FF:000011">
    <property type="entry name" value="Proline--tRNA ligase"/>
    <property type="match status" value="1"/>
</dbReference>
<dbReference type="Gene3D" id="3.40.50.800">
    <property type="entry name" value="Anticodon-binding domain"/>
    <property type="match status" value="1"/>
</dbReference>
<dbReference type="Gene3D" id="3.30.930.10">
    <property type="entry name" value="Bira Bifunctional Protein, Domain 2"/>
    <property type="match status" value="2"/>
</dbReference>
<dbReference type="Gene3D" id="3.90.960.10">
    <property type="entry name" value="YbaK/aminoacyl-tRNA synthetase-associated domain"/>
    <property type="match status" value="1"/>
</dbReference>
<dbReference type="HAMAP" id="MF_01569">
    <property type="entry name" value="Pro_tRNA_synth_type1"/>
    <property type="match status" value="1"/>
</dbReference>
<dbReference type="InterPro" id="IPR002314">
    <property type="entry name" value="aa-tRNA-synt_IIb"/>
</dbReference>
<dbReference type="InterPro" id="IPR006195">
    <property type="entry name" value="aa-tRNA-synth_II"/>
</dbReference>
<dbReference type="InterPro" id="IPR045864">
    <property type="entry name" value="aa-tRNA-synth_II/BPL/LPL"/>
</dbReference>
<dbReference type="InterPro" id="IPR004154">
    <property type="entry name" value="Anticodon-bd"/>
</dbReference>
<dbReference type="InterPro" id="IPR036621">
    <property type="entry name" value="Anticodon-bd_dom_sf"/>
</dbReference>
<dbReference type="InterPro" id="IPR002316">
    <property type="entry name" value="Pro-tRNA-ligase_IIa"/>
</dbReference>
<dbReference type="InterPro" id="IPR004500">
    <property type="entry name" value="Pro-tRNA-synth_IIa_bac-type"/>
</dbReference>
<dbReference type="InterPro" id="IPR023717">
    <property type="entry name" value="Pro-tRNA-Synthase_IIa_type1"/>
</dbReference>
<dbReference type="InterPro" id="IPR050062">
    <property type="entry name" value="Pro-tRNA_synthetase"/>
</dbReference>
<dbReference type="InterPro" id="IPR044140">
    <property type="entry name" value="ProRS_anticodon_short"/>
</dbReference>
<dbReference type="InterPro" id="IPR036754">
    <property type="entry name" value="YbaK/aa-tRNA-synt-asso_dom_sf"/>
</dbReference>
<dbReference type="InterPro" id="IPR007214">
    <property type="entry name" value="YbaK/aa-tRNA-synth-assoc-dom"/>
</dbReference>
<dbReference type="NCBIfam" id="NF006625">
    <property type="entry name" value="PRK09194.1"/>
    <property type="match status" value="1"/>
</dbReference>
<dbReference type="NCBIfam" id="TIGR00409">
    <property type="entry name" value="proS_fam_II"/>
    <property type="match status" value="2"/>
</dbReference>
<dbReference type="PANTHER" id="PTHR42753">
    <property type="entry name" value="MITOCHONDRIAL RIBOSOME PROTEIN L39/PROLYL-TRNA LIGASE FAMILY MEMBER"/>
    <property type="match status" value="1"/>
</dbReference>
<dbReference type="PANTHER" id="PTHR42753:SF2">
    <property type="entry name" value="PROLINE--TRNA LIGASE"/>
    <property type="match status" value="1"/>
</dbReference>
<dbReference type="Pfam" id="PF03129">
    <property type="entry name" value="HGTP_anticodon"/>
    <property type="match status" value="1"/>
</dbReference>
<dbReference type="Pfam" id="PF00587">
    <property type="entry name" value="tRNA-synt_2b"/>
    <property type="match status" value="1"/>
</dbReference>
<dbReference type="Pfam" id="PF04073">
    <property type="entry name" value="tRNA_edit"/>
    <property type="match status" value="1"/>
</dbReference>
<dbReference type="PRINTS" id="PR01046">
    <property type="entry name" value="TRNASYNTHPRO"/>
</dbReference>
<dbReference type="SUPFAM" id="SSF52954">
    <property type="entry name" value="Class II aaRS ABD-related"/>
    <property type="match status" value="1"/>
</dbReference>
<dbReference type="SUPFAM" id="SSF55681">
    <property type="entry name" value="Class II aaRS and biotin synthetases"/>
    <property type="match status" value="1"/>
</dbReference>
<dbReference type="SUPFAM" id="SSF55826">
    <property type="entry name" value="YbaK/ProRS associated domain"/>
    <property type="match status" value="1"/>
</dbReference>
<dbReference type="PROSITE" id="PS50862">
    <property type="entry name" value="AA_TRNA_LIGASE_II"/>
    <property type="match status" value="1"/>
</dbReference>
<proteinExistence type="inferred from homology"/>
<evidence type="ECO:0000255" key="1">
    <source>
        <dbReference type="HAMAP-Rule" id="MF_01569"/>
    </source>
</evidence>
<feature type="chain" id="PRO_0000248780" description="Proline--tRNA ligase">
    <location>
        <begin position="1"/>
        <end position="618"/>
    </location>
</feature>
<organism>
    <name type="scientific">Streptococcus pyogenes serotype M12 (strain MGAS2096)</name>
    <dbReference type="NCBI Taxonomy" id="370553"/>
    <lineage>
        <taxon>Bacteria</taxon>
        <taxon>Bacillati</taxon>
        <taxon>Bacillota</taxon>
        <taxon>Bacilli</taxon>
        <taxon>Lactobacillales</taxon>
        <taxon>Streptococcaceae</taxon>
        <taxon>Streptococcus</taxon>
    </lineage>
</organism>
<reference key="1">
    <citation type="journal article" date="2006" name="Proc. Natl. Acad. Sci. U.S.A.">
        <title>Molecular genetic anatomy of inter- and intraserotype variation in the human bacterial pathogen group A Streptococcus.</title>
        <authorList>
            <person name="Beres S.B."/>
            <person name="Richter E.W."/>
            <person name="Nagiec M.J."/>
            <person name="Sumby P."/>
            <person name="Porcella S.F."/>
            <person name="DeLeo F.R."/>
            <person name="Musser J.M."/>
        </authorList>
    </citation>
    <scope>NUCLEOTIDE SEQUENCE [LARGE SCALE GENOMIC DNA]</scope>
    <source>
        <strain>MGAS2096</strain>
    </source>
</reference>
<sequence>MKQSKLLIPTLREMPSDAQVISHALMVRAGYVRQVSAGIYAYLPLANRTIEKFKTIMREEFEKIGAVEMLAPALLTADLWRESGRYETYGEDLYKLKNRDNSDFILGPTHEETFTTLVRDAVKSYKQLPLNLYQIQSKYRDEKRPRNGLLRTREFIMKDGYSFHHNYEDLDVTYEDYRQAYEAIFTRAGLDFKGIIGDGGAMGGKDSQEFMAITPARTDLDRWVVLDKSIASMDDIPKEVLEEIKAELAAWMISGEDTIAYSTESSYAANLEMATNEYKPSSKVAAEDALAEVETPHCKTIDEVAAFLSVDETQTIKTLLFVADNEPVVALLVGNDHINTVKLKNYLAADFLEPASEEEARAFFGAGFGSLGPVNLAQGSRIVADRKVQNLTNAVAGANKDGFHVTGVNPGRDFQAEYVDIREVKEGEMSPDGHGVLQFARGIEVGHIFKLGTRYSDSMGATILDENGRAVPIVMGCYGIGVSRILSAVIEQHARLFVNKTPKGDYRYAWGVNFPKELAPFDVHLITVNVKDQVAQDLTAKLEADLTAKGYDVLTDDRNERVGSKFSDSDLIGLPIRVTVGKKAAEGIVEIKIKATGASIEVNAENLIETLEILTKEH</sequence>
<accession>Q1J9R3</accession>
<keyword id="KW-0030">Aminoacyl-tRNA synthetase</keyword>
<keyword id="KW-0067">ATP-binding</keyword>
<keyword id="KW-0963">Cytoplasm</keyword>
<keyword id="KW-0436">Ligase</keyword>
<keyword id="KW-0547">Nucleotide-binding</keyword>
<keyword id="KW-0648">Protein biosynthesis</keyword>